<sequence length="122" mass="13273">MIQQESRLKIADNTGAKEILTIRVLGGSGRRYAGLGDVIVATVKDAIPGGNVKKGEVVKAVIVRTKKETRRPDGSYIKFDENAAVILNSNGEPRGTRIFGPVGRELRDKKFMKIISLAPEVI</sequence>
<evidence type="ECO:0000255" key="1">
    <source>
        <dbReference type="HAMAP-Rule" id="MF_01367"/>
    </source>
</evidence>
<evidence type="ECO:0000305" key="2"/>
<reference key="1">
    <citation type="journal article" date="2008" name="J. Bacteriol.">
        <title>Genome of the actinomycete plant pathogen Clavibacter michiganensis subsp. sepedonicus suggests recent niche adaptation.</title>
        <authorList>
            <person name="Bentley S.D."/>
            <person name="Corton C."/>
            <person name="Brown S.E."/>
            <person name="Barron A."/>
            <person name="Clark L."/>
            <person name="Doggett J."/>
            <person name="Harris B."/>
            <person name="Ormond D."/>
            <person name="Quail M.A."/>
            <person name="May G."/>
            <person name="Francis D."/>
            <person name="Knudson D."/>
            <person name="Parkhill J."/>
            <person name="Ishimaru C.A."/>
        </authorList>
    </citation>
    <scope>NUCLEOTIDE SEQUENCE [LARGE SCALE GENOMIC DNA]</scope>
    <source>
        <strain>ATCC 33113 / DSM 20744 / JCM 9667 / LMG 2889 / ICMP 2535 / C-1</strain>
    </source>
</reference>
<accession>B0RB49</accession>
<proteinExistence type="inferred from homology"/>
<keyword id="KW-0687">Ribonucleoprotein</keyword>
<keyword id="KW-0689">Ribosomal protein</keyword>
<keyword id="KW-0694">RNA-binding</keyword>
<keyword id="KW-0699">rRNA-binding</keyword>
<protein>
    <recommendedName>
        <fullName evidence="1">Large ribosomal subunit protein uL14</fullName>
    </recommendedName>
    <alternativeName>
        <fullName evidence="2">50S ribosomal protein L14</fullName>
    </alternativeName>
</protein>
<dbReference type="EMBL" id="AM849034">
    <property type="protein sequence ID" value="CAQ00414.1"/>
    <property type="status" value="ALT_INIT"/>
    <property type="molecule type" value="Genomic_DNA"/>
</dbReference>
<dbReference type="RefSeq" id="WP_012039296.1">
    <property type="nucleotide sequence ID" value="NZ_MZMN01000003.1"/>
</dbReference>
<dbReference type="SMR" id="B0RB49"/>
<dbReference type="STRING" id="31964.CMS0293"/>
<dbReference type="GeneID" id="92984319"/>
<dbReference type="KEGG" id="cms:CMS0293"/>
<dbReference type="eggNOG" id="COG0093">
    <property type="taxonomic scope" value="Bacteria"/>
</dbReference>
<dbReference type="HOGENOM" id="CLU_095071_2_1_11"/>
<dbReference type="OrthoDB" id="9806379at2"/>
<dbReference type="Proteomes" id="UP000001318">
    <property type="component" value="Chromosome"/>
</dbReference>
<dbReference type="GO" id="GO:0022625">
    <property type="term" value="C:cytosolic large ribosomal subunit"/>
    <property type="evidence" value="ECO:0007669"/>
    <property type="project" value="TreeGrafter"/>
</dbReference>
<dbReference type="GO" id="GO:0070180">
    <property type="term" value="F:large ribosomal subunit rRNA binding"/>
    <property type="evidence" value="ECO:0007669"/>
    <property type="project" value="TreeGrafter"/>
</dbReference>
<dbReference type="GO" id="GO:0003735">
    <property type="term" value="F:structural constituent of ribosome"/>
    <property type="evidence" value="ECO:0007669"/>
    <property type="project" value="InterPro"/>
</dbReference>
<dbReference type="GO" id="GO:0006412">
    <property type="term" value="P:translation"/>
    <property type="evidence" value="ECO:0007669"/>
    <property type="project" value="UniProtKB-UniRule"/>
</dbReference>
<dbReference type="CDD" id="cd00337">
    <property type="entry name" value="Ribosomal_uL14"/>
    <property type="match status" value="1"/>
</dbReference>
<dbReference type="FunFam" id="2.40.150.20:FF:000001">
    <property type="entry name" value="50S ribosomal protein L14"/>
    <property type="match status" value="1"/>
</dbReference>
<dbReference type="Gene3D" id="2.40.150.20">
    <property type="entry name" value="Ribosomal protein L14"/>
    <property type="match status" value="1"/>
</dbReference>
<dbReference type="HAMAP" id="MF_01367">
    <property type="entry name" value="Ribosomal_uL14"/>
    <property type="match status" value="1"/>
</dbReference>
<dbReference type="InterPro" id="IPR000218">
    <property type="entry name" value="Ribosomal_uL14"/>
</dbReference>
<dbReference type="InterPro" id="IPR005745">
    <property type="entry name" value="Ribosomal_uL14_bac-type"/>
</dbReference>
<dbReference type="InterPro" id="IPR019972">
    <property type="entry name" value="Ribosomal_uL14_CS"/>
</dbReference>
<dbReference type="InterPro" id="IPR036853">
    <property type="entry name" value="Ribosomal_uL14_sf"/>
</dbReference>
<dbReference type="NCBIfam" id="TIGR01067">
    <property type="entry name" value="rplN_bact"/>
    <property type="match status" value="1"/>
</dbReference>
<dbReference type="PANTHER" id="PTHR11761">
    <property type="entry name" value="50S/60S RIBOSOMAL PROTEIN L14/L23"/>
    <property type="match status" value="1"/>
</dbReference>
<dbReference type="PANTHER" id="PTHR11761:SF3">
    <property type="entry name" value="LARGE RIBOSOMAL SUBUNIT PROTEIN UL14M"/>
    <property type="match status" value="1"/>
</dbReference>
<dbReference type="Pfam" id="PF00238">
    <property type="entry name" value="Ribosomal_L14"/>
    <property type="match status" value="1"/>
</dbReference>
<dbReference type="SMART" id="SM01374">
    <property type="entry name" value="Ribosomal_L14"/>
    <property type="match status" value="1"/>
</dbReference>
<dbReference type="SUPFAM" id="SSF50193">
    <property type="entry name" value="Ribosomal protein L14"/>
    <property type="match status" value="1"/>
</dbReference>
<dbReference type="PROSITE" id="PS00049">
    <property type="entry name" value="RIBOSOMAL_L14"/>
    <property type="match status" value="1"/>
</dbReference>
<name>RL14_CLASE</name>
<gene>
    <name evidence="1" type="primary">rplN</name>
    <name type="ordered locus">CMS0293</name>
</gene>
<comment type="function">
    <text evidence="1">Binds to 23S rRNA. Forms part of two intersubunit bridges in the 70S ribosome.</text>
</comment>
<comment type="subunit">
    <text evidence="1">Part of the 50S ribosomal subunit. Forms a cluster with proteins L3 and L19. In the 70S ribosome, L14 and L19 interact and together make contacts with the 16S rRNA in bridges B5 and B8.</text>
</comment>
<comment type="similarity">
    <text evidence="1">Belongs to the universal ribosomal protein uL14 family.</text>
</comment>
<comment type="sequence caution" evidence="2">
    <conflict type="erroneous initiation">
        <sequence resource="EMBL-CDS" id="CAQ00414"/>
    </conflict>
</comment>
<feature type="chain" id="PRO_0000355812" description="Large ribosomal subunit protein uL14">
    <location>
        <begin position="1"/>
        <end position="122"/>
    </location>
</feature>
<organism>
    <name type="scientific">Clavibacter sepedonicus</name>
    <name type="common">Clavibacter michiganensis subsp. sepedonicus</name>
    <dbReference type="NCBI Taxonomy" id="31964"/>
    <lineage>
        <taxon>Bacteria</taxon>
        <taxon>Bacillati</taxon>
        <taxon>Actinomycetota</taxon>
        <taxon>Actinomycetes</taxon>
        <taxon>Micrococcales</taxon>
        <taxon>Microbacteriaceae</taxon>
        <taxon>Clavibacter</taxon>
    </lineage>
</organism>